<accession>Q1C1Y2</accession>
<dbReference type="EC" id="3.6.4.-" evidence="1"/>
<dbReference type="EMBL" id="CP000308">
    <property type="protein sequence ID" value="ABG15540.1"/>
    <property type="molecule type" value="Genomic_DNA"/>
</dbReference>
<dbReference type="RefSeq" id="WP_002220588.1">
    <property type="nucleotide sequence ID" value="NZ_CP009906.1"/>
</dbReference>
<dbReference type="SMR" id="Q1C1Y2"/>
<dbReference type="GeneID" id="57974093"/>
<dbReference type="KEGG" id="ypa:YPA_3578"/>
<dbReference type="Proteomes" id="UP000001971">
    <property type="component" value="Chromosome"/>
</dbReference>
<dbReference type="GO" id="GO:0005524">
    <property type="term" value="F:ATP binding"/>
    <property type="evidence" value="ECO:0007669"/>
    <property type="project" value="UniProtKB-UniRule"/>
</dbReference>
<dbReference type="GO" id="GO:0003677">
    <property type="term" value="F:DNA binding"/>
    <property type="evidence" value="ECO:0007669"/>
    <property type="project" value="UniProtKB-KW"/>
</dbReference>
<dbReference type="GO" id="GO:0004386">
    <property type="term" value="F:helicase activity"/>
    <property type="evidence" value="ECO:0007669"/>
    <property type="project" value="UniProtKB-UniRule"/>
</dbReference>
<dbReference type="GO" id="GO:0016817">
    <property type="term" value="F:hydrolase activity, acting on acid anhydrides"/>
    <property type="evidence" value="ECO:0007669"/>
    <property type="project" value="InterPro"/>
</dbReference>
<dbReference type="GO" id="GO:0006355">
    <property type="term" value="P:regulation of DNA-templated transcription"/>
    <property type="evidence" value="ECO:0007669"/>
    <property type="project" value="UniProtKB-UniRule"/>
</dbReference>
<dbReference type="CDD" id="cd18011">
    <property type="entry name" value="DEXDc_RapA"/>
    <property type="match status" value="1"/>
</dbReference>
<dbReference type="CDD" id="cd18793">
    <property type="entry name" value="SF2_C_SNF"/>
    <property type="match status" value="1"/>
</dbReference>
<dbReference type="FunFam" id="3.40.50.10810:FF:000012">
    <property type="entry name" value="RNA polymerase-associated protein RapA"/>
    <property type="match status" value="1"/>
</dbReference>
<dbReference type="Gene3D" id="2.30.30.140">
    <property type="match status" value="1"/>
</dbReference>
<dbReference type="Gene3D" id="2.30.30.930">
    <property type="match status" value="1"/>
</dbReference>
<dbReference type="Gene3D" id="3.30.360.80">
    <property type="match status" value="1"/>
</dbReference>
<dbReference type="Gene3D" id="6.10.140.1500">
    <property type="match status" value="1"/>
</dbReference>
<dbReference type="Gene3D" id="6.10.140.2230">
    <property type="match status" value="1"/>
</dbReference>
<dbReference type="Gene3D" id="3.40.50.300">
    <property type="entry name" value="P-loop containing nucleotide triphosphate hydrolases"/>
    <property type="match status" value="1"/>
</dbReference>
<dbReference type="Gene3D" id="3.40.50.10810">
    <property type="entry name" value="Tandem AAA-ATPase domain"/>
    <property type="match status" value="1"/>
</dbReference>
<dbReference type="HAMAP" id="MF_01821">
    <property type="entry name" value="Helicase_RapA"/>
    <property type="match status" value="1"/>
</dbReference>
<dbReference type="InterPro" id="IPR014001">
    <property type="entry name" value="Helicase_ATP-bd"/>
</dbReference>
<dbReference type="InterPro" id="IPR001650">
    <property type="entry name" value="Helicase_C-like"/>
</dbReference>
<dbReference type="InterPro" id="IPR023949">
    <property type="entry name" value="Helicase_RapA"/>
</dbReference>
<dbReference type="InterPro" id="IPR027417">
    <property type="entry name" value="P-loop_NTPase"/>
</dbReference>
<dbReference type="InterPro" id="IPR022737">
    <property type="entry name" value="RapA_C"/>
</dbReference>
<dbReference type="InterPro" id="IPR038718">
    <property type="entry name" value="SNF2-like_sf"/>
</dbReference>
<dbReference type="InterPro" id="IPR049730">
    <property type="entry name" value="SNF2/RAD54-like_C"/>
</dbReference>
<dbReference type="InterPro" id="IPR000330">
    <property type="entry name" value="SNF2_N"/>
</dbReference>
<dbReference type="InterPro" id="IPR040765">
    <property type="entry name" value="Tudor_1_RapA"/>
</dbReference>
<dbReference type="InterPro" id="IPR040766">
    <property type="entry name" value="Tudor_2_RapA"/>
</dbReference>
<dbReference type="NCBIfam" id="NF003426">
    <property type="entry name" value="PRK04914.1"/>
    <property type="match status" value="1"/>
</dbReference>
<dbReference type="PANTHER" id="PTHR45766">
    <property type="entry name" value="DNA ANNEALING HELICASE AND ENDONUCLEASE ZRANB3 FAMILY MEMBER"/>
    <property type="match status" value="1"/>
</dbReference>
<dbReference type="PANTHER" id="PTHR45766:SF6">
    <property type="entry name" value="SWI_SNF-RELATED MATRIX-ASSOCIATED ACTIN-DEPENDENT REGULATOR OF CHROMATIN SUBFAMILY A-LIKE PROTEIN 1"/>
    <property type="match status" value="1"/>
</dbReference>
<dbReference type="Pfam" id="PF00271">
    <property type="entry name" value="Helicase_C"/>
    <property type="match status" value="1"/>
</dbReference>
<dbReference type="Pfam" id="PF12137">
    <property type="entry name" value="RapA_C"/>
    <property type="match status" value="1"/>
</dbReference>
<dbReference type="Pfam" id="PF00176">
    <property type="entry name" value="SNF2-rel_dom"/>
    <property type="match status" value="1"/>
</dbReference>
<dbReference type="Pfam" id="PF18339">
    <property type="entry name" value="Tudor_1_RapA"/>
    <property type="match status" value="1"/>
</dbReference>
<dbReference type="Pfam" id="PF18337">
    <property type="entry name" value="Tudor_RapA"/>
    <property type="match status" value="1"/>
</dbReference>
<dbReference type="SMART" id="SM00487">
    <property type="entry name" value="DEXDc"/>
    <property type="match status" value="1"/>
</dbReference>
<dbReference type="SMART" id="SM00490">
    <property type="entry name" value="HELICc"/>
    <property type="match status" value="1"/>
</dbReference>
<dbReference type="SUPFAM" id="SSF52540">
    <property type="entry name" value="P-loop containing nucleoside triphosphate hydrolases"/>
    <property type="match status" value="2"/>
</dbReference>
<dbReference type="PROSITE" id="PS51192">
    <property type="entry name" value="HELICASE_ATP_BIND_1"/>
    <property type="match status" value="1"/>
</dbReference>
<dbReference type="PROSITE" id="PS51194">
    <property type="entry name" value="HELICASE_CTER"/>
    <property type="match status" value="1"/>
</dbReference>
<reference key="1">
    <citation type="journal article" date="2006" name="J. Bacteriol.">
        <title>Complete genome sequence of Yersinia pestis strains Antiqua and Nepal516: evidence of gene reduction in an emerging pathogen.</title>
        <authorList>
            <person name="Chain P.S.G."/>
            <person name="Hu P."/>
            <person name="Malfatti S.A."/>
            <person name="Radnedge L."/>
            <person name="Larimer F."/>
            <person name="Vergez L.M."/>
            <person name="Worsham P."/>
            <person name="Chu M.C."/>
            <person name="Andersen G.L."/>
        </authorList>
    </citation>
    <scope>NUCLEOTIDE SEQUENCE [LARGE SCALE GENOMIC DNA]</scope>
    <source>
        <strain>Antiqua</strain>
    </source>
</reference>
<evidence type="ECO:0000255" key="1">
    <source>
        <dbReference type="HAMAP-Rule" id="MF_01821"/>
    </source>
</evidence>
<organism>
    <name type="scientific">Yersinia pestis bv. Antiqua (strain Antiqua)</name>
    <dbReference type="NCBI Taxonomy" id="360102"/>
    <lineage>
        <taxon>Bacteria</taxon>
        <taxon>Pseudomonadati</taxon>
        <taxon>Pseudomonadota</taxon>
        <taxon>Gammaproteobacteria</taxon>
        <taxon>Enterobacterales</taxon>
        <taxon>Yersiniaceae</taxon>
        <taxon>Yersinia</taxon>
    </lineage>
</organism>
<comment type="function">
    <text evidence="1">Transcription regulator that activates transcription by stimulating RNA polymerase (RNAP) recycling in case of stress conditions such as supercoiled DNA or high salt concentrations. Probably acts by releasing the RNAP, when it is trapped or immobilized on tightly supercoiled DNA. Does not activate transcription on linear DNA. Probably not involved in DNA repair.</text>
</comment>
<comment type="subunit">
    <text evidence="1">Interacts with the RNAP. Has a higher affinity for the core RNAP than for the holoenzyme. Its ATPase activity is stimulated by binding to RNAP.</text>
</comment>
<comment type="similarity">
    <text evidence="1">Belongs to the SNF2/RAD54 helicase family. RapA subfamily.</text>
</comment>
<gene>
    <name evidence="1" type="primary">rapA</name>
    <name type="ordered locus">YPA_3578</name>
</gene>
<protein>
    <recommendedName>
        <fullName evidence="1">RNA polymerase-associated protein RapA</fullName>
        <ecNumber evidence="1">3.6.4.-</ecNumber>
    </recommendedName>
    <alternativeName>
        <fullName evidence="1">ATP-dependent helicase HepA</fullName>
    </alternativeName>
</protein>
<sequence>MPFTLGQRWISDTESELGLGTVVAIDVRMITLLFPATGENRLYARNDSPITRVMFNPSDTITHHEGWQLKVEEVTQENGLITYIGTRLDTEETGVAMREVLLDSKLTFSKPQDRLFAGQIDRMDRFALRFRARKYQSEQFRLPWSGLRGIRASLIPHQLHIAYEVGQRHAPRVLLADEVGLGKTIEAGMIIHQQLLAGRAERVLIVVPESLQHQWLVEMLRRFNLRFSLFDDSRYSEALLDSSNPFDTEQMVICSLDFVRRNKQRLEQLADASWDLLVVDEAHHMAWSEEAPSREYQVIEQLAEHIPGVLLLTATPEQLGQQSHFARLRLLDPDRFHDYEEFVNEQQKYRPIADAVTLLLGGERLTDDKLNLLGELIDEQDIEPLLKAANSQSEDSEAARQELVTMLMDRHGTSRVLFRNTRNGVKGFPHRVLHQIKLPLPTQYQTAIKVSGIMGAKKTLDARAKDMLYPEQIYQEFEGENATWWNFDPRVEWLLNYLVANRGEKVLVICAQAATALQLEQVLREREAIRAAVFHEGLSLIERDRAAAYFASEEDGAQVLLCSEIGSEGRNFQFACQLVMFDLPFNPDLLEQRIGRLDRIGQNREIQIMVPYLEDTAQAILVRWYHEGLDAFEHTCPTGRTIYDSSYQELISYLATPSEQEGLDEFIHTCRQQHEGLKLQLEQGRDRLLEMHSNGGEHGQELAQSIAEQDNDINLVSFALNLFDIVGINQEDRSDNLIVLTPSDHMLVPDFPGLPPDGCTVTFDREQALSREDAQFVSWEHPIIRNGLDLILSGDTGSCAVSLLKNKALPVGTLLAELVYVVEAQAPKHLQLTRFLPPTPVRMLMDRNGTNLAAQVEFESFNRQLNAVNRHTSSKLVNAVQQEVHTMLQQAEALVEAQAQALIETAKREADDKLSTELARLEALKAVNPNIRDDEIEALEHNRKMVLENLNQAGWRLDAIRLVVVTHQ</sequence>
<name>RAPA_YERPA</name>
<keyword id="KW-0010">Activator</keyword>
<keyword id="KW-0067">ATP-binding</keyword>
<keyword id="KW-0238">DNA-binding</keyword>
<keyword id="KW-0347">Helicase</keyword>
<keyword id="KW-0378">Hydrolase</keyword>
<keyword id="KW-0547">Nucleotide-binding</keyword>
<keyword id="KW-0804">Transcription</keyword>
<keyword id="KW-0805">Transcription regulation</keyword>
<feature type="chain" id="PRO_1000088401" description="RNA polymerase-associated protein RapA">
    <location>
        <begin position="1"/>
        <end position="968"/>
    </location>
</feature>
<feature type="domain" description="Helicase ATP-binding" evidence="1">
    <location>
        <begin position="164"/>
        <end position="334"/>
    </location>
</feature>
<feature type="domain" description="Helicase C-terminal" evidence="1">
    <location>
        <begin position="490"/>
        <end position="644"/>
    </location>
</feature>
<feature type="short sequence motif" description="DEAH box">
    <location>
        <begin position="280"/>
        <end position="283"/>
    </location>
</feature>
<feature type="binding site" evidence="1">
    <location>
        <begin position="177"/>
        <end position="184"/>
    </location>
    <ligand>
        <name>ATP</name>
        <dbReference type="ChEBI" id="CHEBI:30616"/>
    </ligand>
</feature>
<proteinExistence type="inferred from homology"/>